<evidence type="ECO:0000250" key="1"/>
<evidence type="ECO:0000255" key="2">
    <source>
        <dbReference type="PROSITE-ProRule" id="PRU00448"/>
    </source>
</evidence>
<evidence type="ECO:0000269" key="3">
    <source>
    </source>
</evidence>
<evidence type="ECO:0000269" key="4">
    <source>
    </source>
</evidence>
<evidence type="ECO:0000269" key="5">
    <source>
    </source>
</evidence>
<evidence type="ECO:0000269" key="6">
    <source>
    </source>
</evidence>
<evidence type="ECO:0000269" key="7">
    <source>
    </source>
</evidence>
<evidence type="ECO:0000269" key="8">
    <source>
    </source>
</evidence>
<evidence type="ECO:0000305" key="9"/>
<evidence type="ECO:0007829" key="10">
    <source>
        <dbReference type="PDB" id="4DUQ"/>
    </source>
</evidence>
<proteinExistence type="evidence at protein level"/>
<comment type="function">
    <text evidence="3 6">May function as calcium sensor and modulator, contributing to cellular calcium signaling. May function by interacting with other proteins, such as TPR-containing proteins, and indirectly play a role in many physiological processes. May also play a role in suppressing tumor cell growth.</text>
</comment>
<comment type="subunit">
    <text evidence="4 5 6 7">Homodimer. Interacts with FKBP4. Interacts with PPP5C (via TPR repeats); the interaction is calcium-dependent and modulates PPP5C activity. Interacts with TPPP; this interaction inhibits TPPP dimerization (PubMed:33831707).</text>
</comment>
<comment type="interaction">
    <interactant intactId="EBI-752230">
        <id>P29034</id>
    </interactant>
    <interactant intactId="EBI-11343438">
        <id>Q3SXY8</id>
        <label>ARL13B</label>
    </interactant>
    <organismsDiffer>false</organismsDiffer>
    <experiments>3</experiments>
</comment>
<comment type="interaction">
    <interactant intactId="EBI-752230">
        <id>P29034</id>
    </interactant>
    <interactant intactId="EBI-1056902">
        <id>P15311</id>
        <label>EZR</label>
    </interactant>
    <organismsDiffer>false</organismsDiffer>
    <experiments>2</experiments>
</comment>
<comment type="interaction">
    <interactant intactId="EBI-752230">
        <id>P29034</id>
    </interactant>
    <interactant intactId="EBI-18304435">
        <id>Q5JX71</id>
        <label>FAM209A</label>
    </interactant>
    <organismsDiffer>false</organismsDiffer>
    <experiments>3</experiments>
</comment>
<comment type="interaction">
    <interactant intactId="EBI-752230">
        <id>P29034</id>
    </interactant>
    <interactant intactId="EBI-1047444">
        <id>Q02790</id>
        <label>FKBP4</label>
    </interactant>
    <organismsDiffer>false</organismsDiffer>
    <experiments>3</experiments>
</comment>
<comment type="interaction">
    <interactant intactId="EBI-752230">
        <id>P29034</id>
    </interactant>
    <interactant intactId="EBI-349938">
        <id>P52292</id>
        <label>KPNA2</label>
    </interactant>
    <organismsDiffer>false</organismsDiffer>
    <experiments>5</experiments>
</comment>
<comment type="interaction">
    <interactant intactId="EBI-752230">
        <id>P29034</id>
    </interactant>
    <interactant intactId="EBI-389668">
        <id>Q00987</id>
        <label>MDM2</label>
    </interactant>
    <organismsDiffer>false</organismsDiffer>
    <experiments>2</experiments>
</comment>
<comment type="interaction">
    <interactant intactId="EBI-752230">
        <id>P29034</id>
    </interactant>
    <interactant intactId="EBI-398437">
        <id>O15151</id>
        <label>MDM4</label>
    </interactant>
    <organismsDiffer>false</organismsDiffer>
    <experiments>2</experiments>
</comment>
<comment type="interaction">
    <interactant intactId="EBI-752230">
        <id>P29034</id>
    </interactant>
    <interactant intactId="EBI-350338">
        <id>P35579</id>
        <label>MYH9</label>
    </interactant>
    <organismsDiffer>false</organismsDiffer>
    <experiments>2</experiments>
</comment>
<comment type="interaction">
    <interactant intactId="EBI-752230">
        <id>P29034</id>
    </interactant>
    <interactant intactId="EBI-743686">
        <id>P23297</id>
        <label>S100A1</label>
    </interactant>
    <organismsDiffer>false</organismsDiffer>
    <experiments>7</experiments>
</comment>
<comment type="interaction">
    <interactant intactId="EBI-752230">
        <id>P29034</id>
    </interactant>
    <interactant intactId="EBI-752230">
        <id>P29034</id>
        <label>S100A2</label>
    </interactant>
    <organismsDiffer>false</organismsDiffer>
    <experiments>6</experiments>
</comment>
<comment type="interaction">
    <interactant intactId="EBI-752230">
        <id>P29034</id>
    </interactant>
    <interactant intactId="EBI-1044747">
        <id>P33764</id>
        <label>S100A3</label>
    </interactant>
    <organismsDiffer>false</organismsDiffer>
    <experiments>5</experiments>
</comment>
<comment type="interaction">
    <interactant intactId="EBI-752230">
        <id>P29034</id>
    </interactant>
    <interactant intactId="EBI-458391">
        <id>P04271</id>
        <label>S100B</label>
    </interactant>
    <organismsDiffer>false</organismsDiffer>
    <experiments>9</experiments>
</comment>
<comment type="interaction">
    <interactant intactId="EBI-752230">
        <id>P29034</id>
    </interactant>
    <interactant intactId="EBI-366083">
        <id>P04637</id>
        <label>TP53</label>
    </interactant>
    <organismsDiffer>false</organismsDiffer>
    <experiments>4</experiments>
</comment>
<comment type="interaction">
    <interactant intactId="EBI-752230">
        <id>P29034</id>
    </interactant>
    <interactant intactId="EBI-11723041">
        <id>Q8TD43</id>
        <label>TRPM4</label>
    </interactant>
    <organismsDiffer>false</organismsDiffer>
    <experiments>2</experiments>
</comment>
<comment type="interaction">
    <interactant intactId="EBI-752230">
        <id>P29034</id>
    </interactant>
    <interactant intactId="EBI-3043908">
        <id>P52293</id>
        <label>Kpna2</label>
    </interactant>
    <organismsDiffer>true</organismsDiffer>
    <experiments>2</experiments>
</comment>
<comment type="interaction">
    <interactant intactId="EBI-752230">
        <id>P29034</id>
    </interactant>
    <interactant intactId="EBI-6477155">
        <id>P26882</id>
        <label>PPID</label>
    </interactant>
    <organismsDiffer>true</organismsDiffer>
    <experiments>3</experiments>
</comment>
<comment type="tissue specificity">
    <text evidence="3">A subset of epithelial cells including normal human mammary epithelial cells and keratinocytes.</text>
</comment>
<comment type="developmental stage">
    <text evidence="8">Preferentially expressed in normal human mammary epithelial cells as opposed to tumor-derived ones. The level of S100L was shown to correlate inversely with tumor progression.</text>
</comment>
<comment type="induction">
    <text evidence="3 8">By growth factors in early G1 phase and probably by cell-cycle regulation in S phase. DNA methylation probably plays a direct negative role in suppressing S100L gene expression in tumor cells.</text>
</comment>
<comment type="miscellaneous">
    <text evidence="1">This protein binds two calcium ions.</text>
</comment>
<comment type="similarity">
    <text evidence="9">Belongs to the S-100 family.</text>
</comment>
<comment type="caution">
    <text evidence="9">It is uncertain whether Met-1 or Met-2 is the initiator.</text>
</comment>
<comment type="sequence caution" evidence="9">
    <conflict type="erroneous initiation">
        <sequence resource="EMBL-CDS" id="CAA69033"/>
    </conflict>
    <text>Truncated N-terminus.</text>
</comment>
<comment type="online information" name="Atlas of Genetics and Cytogenetics in Oncology and Haematology">
    <link uri="https://atlasgeneticsoncology.org/gene/42191/S100A2"/>
</comment>
<name>S10A2_HUMAN</name>
<sequence length="98" mass="11117">MMCSSLEQALAVLVTTFHKYSCQEGDKFKLSKGEMKELLHKELPSFVGEKVDEEGLKKLMGSLDENSDQQVDFQEYAVFLALITVMCNDFFQGCPDRP</sequence>
<feature type="chain" id="PRO_0000143971" description="Protein S100-A2">
    <location>
        <begin position="1"/>
        <end position="98"/>
    </location>
</feature>
<feature type="domain" description="EF-hand 1" evidence="9">
    <location>
        <begin position="13"/>
        <end position="48"/>
    </location>
</feature>
<feature type="domain" description="EF-hand 2" evidence="2">
    <location>
        <begin position="51"/>
        <end position="86"/>
    </location>
</feature>
<feature type="binding site" evidence="9">
    <location>
        <position position="29"/>
    </location>
    <ligand>
        <name>Ca(2+)</name>
        <dbReference type="ChEBI" id="CHEBI:29108"/>
        <label>1</label>
        <note>low affinity</note>
    </ligand>
</feature>
<feature type="binding site" evidence="9">
    <location>
        <position position="34"/>
    </location>
    <ligand>
        <name>Ca(2+)</name>
        <dbReference type="ChEBI" id="CHEBI:29108"/>
        <label>1</label>
        <note>low affinity</note>
    </ligand>
</feature>
<feature type="binding site" evidence="2">
    <location>
        <position position="64"/>
    </location>
    <ligand>
        <name>Ca(2+)</name>
        <dbReference type="ChEBI" id="CHEBI:29108"/>
        <label>2</label>
        <note>high affinity</note>
    </ligand>
</feature>
<feature type="binding site" evidence="2">
    <location>
        <position position="66"/>
    </location>
    <ligand>
        <name>Ca(2+)</name>
        <dbReference type="ChEBI" id="CHEBI:29108"/>
        <label>2</label>
        <note>high affinity</note>
    </ligand>
</feature>
<feature type="binding site" evidence="2">
    <location>
        <position position="68"/>
    </location>
    <ligand>
        <name>Ca(2+)</name>
        <dbReference type="ChEBI" id="CHEBI:29108"/>
        <label>2</label>
        <note>high affinity</note>
    </ligand>
</feature>
<feature type="binding site" evidence="2">
    <location>
        <position position="70"/>
    </location>
    <ligand>
        <name>Ca(2+)</name>
        <dbReference type="ChEBI" id="CHEBI:29108"/>
        <label>2</label>
        <note>high affinity</note>
    </ligand>
</feature>
<feature type="binding site" evidence="2">
    <location>
        <position position="75"/>
    </location>
    <ligand>
        <name>Ca(2+)</name>
        <dbReference type="ChEBI" id="CHEBI:29108"/>
        <label>2</label>
        <note>high affinity</note>
    </ligand>
</feature>
<feature type="sequence conflict" description="In Ref. 1; M87068." evidence="9" ref="1">
    <original>S</original>
    <variation>N</variation>
    <location>
        <position position="62"/>
    </location>
</feature>
<feature type="helix" evidence="10">
    <location>
        <begin position="5"/>
        <end position="21"/>
    </location>
</feature>
<feature type="strand" evidence="10">
    <location>
        <begin position="23"/>
        <end position="26"/>
    </location>
</feature>
<feature type="helix" evidence="10">
    <location>
        <begin position="32"/>
        <end position="42"/>
    </location>
</feature>
<feature type="helix" evidence="10">
    <location>
        <begin position="44"/>
        <end position="47"/>
    </location>
</feature>
<feature type="helix" evidence="10">
    <location>
        <begin position="53"/>
        <end position="63"/>
    </location>
</feature>
<feature type="strand" evidence="10">
    <location>
        <begin position="67"/>
        <end position="71"/>
    </location>
</feature>
<feature type="helix" evidence="10">
    <location>
        <begin position="73"/>
        <end position="89"/>
    </location>
</feature>
<reference key="1">
    <citation type="journal article" date="1992" name="Proc. Natl. Acad. Sci. U.S.A.">
        <title>Down-regulation of a member of the S100 gene family in mammary carcinoma cells and reexpression by azadeoxycytidine treatment.</title>
        <authorList>
            <person name="Lee S.W."/>
            <person name="Tomasetto C."/>
            <person name="Swisshelm K."/>
            <person name="Keyomarsi K."/>
            <person name="Sager R."/>
        </authorList>
    </citation>
    <scope>NUCLEOTIDE SEQUENCE [MRNA]</scope>
    <scope>FUNCTION</scope>
    <scope>TISSUE SPECIFICITY</scope>
    <scope>INDUCTION</scope>
    <source>
        <tissue>Mammary epithelium</tissue>
    </source>
</reference>
<reference key="2">
    <citation type="journal article" date="1997" name="Cell Calcium">
        <title>Repression of the candidate tumor suppressor gene S100A2 in breast cancer is mediated by site-specific hypermethylation.</title>
        <authorList>
            <person name="Wicki R."/>
            <person name="Franz C."/>
            <person name="Scholl F.A."/>
            <person name="Heizmann C.W."/>
            <person name="Schaefer B.W."/>
        </authorList>
    </citation>
    <scope>NUCLEOTIDE SEQUENCE [GENOMIC DNA]</scope>
    <scope>DEVELOPMENTAL STAGE</scope>
    <scope>INDUCTION</scope>
</reference>
<reference key="3">
    <citation type="journal article" date="2006" name="Nature">
        <title>The DNA sequence and biological annotation of human chromosome 1.</title>
        <authorList>
            <person name="Gregory S.G."/>
            <person name="Barlow K.F."/>
            <person name="McLay K.E."/>
            <person name="Kaul R."/>
            <person name="Swarbreck D."/>
            <person name="Dunham A."/>
            <person name="Scott C.E."/>
            <person name="Howe K.L."/>
            <person name="Woodfine K."/>
            <person name="Spencer C.C.A."/>
            <person name="Jones M.C."/>
            <person name="Gillson C."/>
            <person name="Searle S."/>
            <person name="Zhou Y."/>
            <person name="Kokocinski F."/>
            <person name="McDonald L."/>
            <person name="Evans R."/>
            <person name="Phillips K."/>
            <person name="Atkinson A."/>
            <person name="Cooper R."/>
            <person name="Jones C."/>
            <person name="Hall R.E."/>
            <person name="Andrews T.D."/>
            <person name="Lloyd C."/>
            <person name="Ainscough R."/>
            <person name="Almeida J.P."/>
            <person name="Ambrose K.D."/>
            <person name="Anderson F."/>
            <person name="Andrew R.W."/>
            <person name="Ashwell R.I.S."/>
            <person name="Aubin K."/>
            <person name="Babbage A.K."/>
            <person name="Bagguley C.L."/>
            <person name="Bailey J."/>
            <person name="Beasley H."/>
            <person name="Bethel G."/>
            <person name="Bird C.P."/>
            <person name="Bray-Allen S."/>
            <person name="Brown J.Y."/>
            <person name="Brown A.J."/>
            <person name="Buckley D."/>
            <person name="Burton J."/>
            <person name="Bye J."/>
            <person name="Carder C."/>
            <person name="Chapman J.C."/>
            <person name="Clark S.Y."/>
            <person name="Clarke G."/>
            <person name="Clee C."/>
            <person name="Cobley V."/>
            <person name="Collier R.E."/>
            <person name="Corby N."/>
            <person name="Coville G.J."/>
            <person name="Davies J."/>
            <person name="Deadman R."/>
            <person name="Dunn M."/>
            <person name="Earthrowl M."/>
            <person name="Ellington A.G."/>
            <person name="Errington H."/>
            <person name="Frankish A."/>
            <person name="Frankland J."/>
            <person name="French L."/>
            <person name="Garner P."/>
            <person name="Garnett J."/>
            <person name="Gay L."/>
            <person name="Ghori M.R.J."/>
            <person name="Gibson R."/>
            <person name="Gilby L.M."/>
            <person name="Gillett W."/>
            <person name="Glithero R.J."/>
            <person name="Grafham D.V."/>
            <person name="Griffiths C."/>
            <person name="Griffiths-Jones S."/>
            <person name="Grocock R."/>
            <person name="Hammond S."/>
            <person name="Harrison E.S.I."/>
            <person name="Hart E."/>
            <person name="Haugen E."/>
            <person name="Heath P.D."/>
            <person name="Holmes S."/>
            <person name="Holt K."/>
            <person name="Howden P.J."/>
            <person name="Hunt A.R."/>
            <person name="Hunt S.E."/>
            <person name="Hunter G."/>
            <person name="Isherwood J."/>
            <person name="James R."/>
            <person name="Johnson C."/>
            <person name="Johnson D."/>
            <person name="Joy A."/>
            <person name="Kay M."/>
            <person name="Kershaw J.K."/>
            <person name="Kibukawa M."/>
            <person name="Kimberley A.M."/>
            <person name="King A."/>
            <person name="Knights A.J."/>
            <person name="Lad H."/>
            <person name="Laird G."/>
            <person name="Lawlor S."/>
            <person name="Leongamornlert D.A."/>
            <person name="Lloyd D.M."/>
            <person name="Loveland J."/>
            <person name="Lovell J."/>
            <person name="Lush M.J."/>
            <person name="Lyne R."/>
            <person name="Martin S."/>
            <person name="Mashreghi-Mohammadi M."/>
            <person name="Matthews L."/>
            <person name="Matthews N.S.W."/>
            <person name="McLaren S."/>
            <person name="Milne S."/>
            <person name="Mistry S."/>
            <person name="Moore M.J.F."/>
            <person name="Nickerson T."/>
            <person name="O'Dell C.N."/>
            <person name="Oliver K."/>
            <person name="Palmeiri A."/>
            <person name="Palmer S.A."/>
            <person name="Parker A."/>
            <person name="Patel D."/>
            <person name="Pearce A.V."/>
            <person name="Peck A.I."/>
            <person name="Pelan S."/>
            <person name="Phelps K."/>
            <person name="Phillimore B.J."/>
            <person name="Plumb R."/>
            <person name="Rajan J."/>
            <person name="Raymond C."/>
            <person name="Rouse G."/>
            <person name="Saenphimmachak C."/>
            <person name="Sehra H.K."/>
            <person name="Sheridan E."/>
            <person name="Shownkeen R."/>
            <person name="Sims S."/>
            <person name="Skuce C.D."/>
            <person name="Smith M."/>
            <person name="Steward C."/>
            <person name="Subramanian S."/>
            <person name="Sycamore N."/>
            <person name="Tracey A."/>
            <person name="Tromans A."/>
            <person name="Van Helmond Z."/>
            <person name="Wall M."/>
            <person name="Wallis J.M."/>
            <person name="White S."/>
            <person name="Whitehead S.L."/>
            <person name="Wilkinson J.E."/>
            <person name="Willey D.L."/>
            <person name="Williams H."/>
            <person name="Wilming L."/>
            <person name="Wray P.W."/>
            <person name="Wu Z."/>
            <person name="Coulson A."/>
            <person name="Vaudin M."/>
            <person name="Sulston J.E."/>
            <person name="Durbin R.M."/>
            <person name="Hubbard T."/>
            <person name="Wooster R."/>
            <person name="Dunham I."/>
            <person name="Carter N.P."/>
            <person name="McVean G."/>
            <person name="Ross M.T."/>
            <person name="Harrow J."/>
            <person name="Olson M.V."/>
            <person name="Beck S."/>
            <person name="Rogers J."/>
            <person name="Bentley D.R."/>
        </authorList>
    </citation>
    <scope>NUCLEOTIDE SEQUENCE [LARGE SCALE GENOMIC DNA]</scope>
</reference>
<reference key="4">
    <citation type="journal article" date="2004" name="Genome Res.">
        <title>The status, quality, and expansion of the NIH full-length cDNA project: the Mammalian Gene Collection (MGC).</title>
        <authorList>
            <consortium name="The MGC Project Team"/>
        </authorList>
    </citation>
    <scope>NUCLEOTIDE SEQUENCE [LARGE SCALE MRNA]</scope>
    <source>
        <tissue>Ovary</tissue>
    </source>
</reference>
<reference key="5">
    <citation type="journal article" date="1992" name="Electrophoresis">
        <title>Microsequences of 145 proteins recorded in the two-dimensional gel protein database of normal human epidermal keratinocytes.</title>
        <authorList>
            <person name="Rasmussen H.H."/>
            <person name="van Damme J."/>
            <person name="Puype M."/>
            <person name="Gesser B."/>
            <person name="Celis J.E."/>
            <person name="Vandekerckhove J."/>
        </authorList>
    </citation>
    <scope>PROTEIN SEQUENCE OF 37-40 AND 42-49</scope>
    <source>
        <tissue>Keratinocyte</tissue>
    </source>
</reference>
<reference key="6">
    <citation type="journal article" date="2010" name="FEBS Lett.">
        <title>S100 proteins regulate the interaction of Hsp90 with cyclophilin 40 and FKBP52 through their tetratricopeptide repeats.</title>
        <authorList>
            <person name="Shimamoto S."/>
            <person name="Kubota Y."/>
            <person name="Tokumitsu H."/>
            <person name="Kobayashi R."/>
        </authorList>
    </citation>
    <scope>INTERACTION WITH FKBP4</scope>
</reference>
<reference key="7">
    <citation type="journal article" date="2011" name="BMC Syst. Biol.">
        <title>Initial characterization of the human central proteome.</title>
        <authorList>
            <person name="Burkard T.R."/>
            <person name="Planyavsky M."/>
            <person name="Kaupe I."/>
            <person name="Breitwieser F.P."/>
            <person name="Buerckstuemmer T."/>
            <person name="Bennett K.L."/>
            <person name="Superti-Furga G."/>
            <person name="Colinge J."/>
        </authorList>
    </citation>
    <scope>IDENTIFICATION BY MASS SPECTROMETRY [LARGE SCALE ANALYSIS]</scope>
</reference>
<reference key="8">
    <citation type="journal article" date="2012" name="J. Biol. Chem.">
        <title>S100 proteins modulate protein phosphatase 5 function: a link between CA2+ signal transduction and protein dephosphorylation.</title>
        <authorList>
            <person name="Yamaguchi F."/>
            <person name="Umeda Y."/>
            <person name="Shimamoto S."/>
            <person name="Tsuchiya M."/>
            <person name="Tokumitsu H."/>
            <person name="Tokuda M."/>
            <person name="Kobayashi R."/>
        </authorList>
    </citation>
    <scope>FUNCTION IN CALCIUM SIGNALING</scope>
    <scope>INTERACTION WITH PPP5C</scope>
</reference>
<reference key="9">
    <citation type="journal article" date="2008" name="J. Mol. Biol.">
        <title>Crystal structure of Ca2+ -free S100A2 at 1.6-A resolution.</title>
        <authorList>
            <person name="Koch M."/>
            <person name="Diez J."/>
            <person name="Fritz G."/>
        </authorList>
    </citation>
    <scope>X-RAY CRYSTALLOGRAPHY (1.6 ANGSTROMS)</scope>
    <scope>SUBUNIT</scope>
</reference>
<reference key="10">
    <citation type="journal article" date="2021" name="Cell Calcium">
        <title>Regulation of the tubulin polymerization-promoting protein by Ca2+/S100 proteins.</title>
        <authorList>
            <person name="Doi S."/>
            <person name="Fujioka N."/>
            <person name="Ohtsuka S."/>
            <person name="Kondo R."/>
            <person name="Yamamoto M."/>
            <person name="Denda M."/>
            <person name="Magari M."/>
            <person name="Kanayama N."/>
            <person name="Hatano N."/>
            <person name="Morishita R."/>
            <person name="Hasegawa T."/>
            <person name="Tokumitsu H."/>
        </authorList>
    </citation>
    <scope>INTERACTION WITH TPPP</scope>
</reference>
<accession>P29034</accession>
<accession>O00266</accession>
<accession>Q3KRB9</accession>
<accession>Q5RHS8</accession>
<accession>Q9BU83</accession>
<protein>
    <recommendedName>
        <fullName>Protein S100-A2</fullName>
    </recommendedName>
    <alternativeName>
        <fullName>CAN19</fullName>
    </alternativeName>
    <alternativeName>
        <fullName>Protein S-100L</fullName>
    </alternativeName>
    <alternativeName>
        <fullName>S100 calcium-binding protein A2</fullName>
    </alternativeName>
</protein>
<gene>
    <name type="primary">S100A2</name>
    <name type="synonym">S100L</name>
</gene>
<dbReference type="EMBL" id="M87068">
    <property type="status" value="NOT_ANNOTATED_CDS"/>
    <property type="molecule type" value="mRNA"/>
</dbReference>
<dbReference type="EMBL" id="Y07755">
    <property type="protein sequence ID" value="CAA69033.1"/>
    <property type="status" value="ALT_INIT"/>
    <property type="molecule type" value="Genomic_DNA"/>
</dbReference>
<dbReference type="EMBL" id="BX470102">
    <property type="status" value="NOT_ANNOTATED_CDS"/>
    <property type="molecule type" value="Genomic_DNA"/>
</dbReference>
<dbReference type="EMBL" id="BC002829">
    <property type="protein sequence ID" value="AAH02829.3"/>
    <property type="molecule type" value="mRNA"/>
</dbReference>
<dbReference type="EMBL" id="BC105787">
    <property type="protein sequence ID" value="AAI05788.1"/>
    <property type="molecule type" value="mRNA"/>
</dbReference>
<dbReference type="CCDS" id="CCDS1044.2"/>
<dbReference type="PIR" id="A41988">
    <property type="entry name" value="A41988"/>
</dbReference>
<dbReference type="RefSeq" id="NP_005969.2">
    <property type="nucleotide sequence ID" value="NM_005978.4"/>
</dbReference>
<dbReference type="PDB" id="2RGI">
    <property type="method" value="X-ray"/>
    <property type="resolution" value="1.60 A"/>
    <property type="chains" value="A/B=1-98"/>
</dbReference>
<dbReference type="PDB" id="4DUQ">
    <property type="method" value="X-ray"/>
    <property type="resolution" value="1.30 A"/>
    <property type="chains" value="A/B=1-98"/>
</dbReference>
<dbReference type="PDBsum" id="2RGI"/>
<dbReference type="PDBsum" id="4DUQ"/>
<dbReference type="BMRB" id="P29034"/>
<dbReference type="SMR" id="P29034"/>
<dbReference type="BioGRID" id="112181">
    <property type="interactions" value="496"/>
</dbReference>
<dbReference type="FunCoup" id="P29034">
    <property type="interactions" value="145"/>
</dbReference>
<dbReference type="IntAct" id="P29034">
    <property type="interactions" value="355"/>
</dbReference>
<dbReference type="MINT" id="P29034"/>
<dbReference type="STRING" id="9606.ENSP00000499289"/>
<dbReference type="DrugBank" id="DB01373">
    <property type="generic name" value="Calcium"/>
</dbReference>
<dbReference type="DrugBank" id="DB09130">
    <property type="generic name" value="Copper"/>
</dbReference>
<dbReference type="DrugBank" id="DB00768">
    <property type="generic name" value="Olopatadine"/>
</dbReference>
<dbReference type="DrugBank" id="DB01593">
    <property type="generic name" value="Zinc"/>
</dbReference>
<dbReference type="DrugBank" id="DB14487">
    <property type="generic name" value="Zinc acetate"/>
</dbReference>
<dbReference type="DrugBank" id="DB14533">
    <property type="generic name" value="Zinc chloride"/>
</dbReference>
<dbReference type="DrugBank" id="DB14548">
    <property type="generic name" value="Zinc sulfate, unspecified form"/>
</dbReference>
<dbReference type="iPTMnet" id="P29034"/>
<dbReference type="PhosphoSitePlus" id="P29034"/>
<dbReference type="SwissPalm" id="P29034"/>
<dbReference type="BioMuta" id="S100A2"/>
<dbReference type="DMDM" id="114152869"/>
<dbReference type="CPTAC" id="CPTAC-1453"/>
<dbReference type="jPOST" id="P29034"/>
<dbReference type="MassIVE" id="P29034"/>
<dbReference type="PaxDb" id="9606-ENSP00000357697"/>
<dbReference type="PeptideAtlas" id="P29034"/>
<dbReference type="PRIDE" id="P29034"/>
<dbReference type="ProteomicsDB" id="54515"/>
<dbReference type="Pumba" id="P29034"/>
<dbReference type="Antibodypedia" id="34127">
    <property type="antibodies" value="266 antibodies from 30 providers"/>
</dbReference>
<dbReference type="CPTC" id="P29034">
    <property type="antibodies" value="3 antibodies"/>
</dbReference>
<dbReference type="DNASU" id="6273"/>
<dbReference type="Ensembl" id="ENST00000368708.9">
    <property type="protein sequence ID" value="ENSP00000357697.4"/>
    <property type="gene ID" value="ENSG00000196754.13"/>
</dbReference>
<dbReference type="Ensembl" id="ENST00000368709.6">
    <property type="protein sequence ID" value="ENSP00000357698.2"/>
    <property type="gene ID" value="ENSG00000196754.13"/>
</dbReference>
<dbReference type="Ensembl" id="ENST00000368710.6">
    <property type="protein sequence ID" value="ENSP00000357699.2"/>
    <property type="gene ID" value="ENSG00000196754.13"/>
</dbReference>
<dbReference type="Ensembl" id="ENST00000487430.7">
    <property type="protein sequence ID" value="ENSP00000473260.2"/>
    <property type="gene ID" value="ENSG00000196754.13"/>
</dbReference>
<dbReference type="GeneID" id="6273"/>
<dbReference type="KEGG" id="hsa:6273"/>
<dbReference type="MANE-Select" id="ENST00000368708.9">
    <property type="protein sequence ID" value="ENSP00000357697.4"/>
    <property type="RefSeq nucleotide sequence ID" value="NM_005978.4"/>
    <property type="RefSeq protein sequence ID" value="NP_005969.2"/>
</dbReference>
<dbReference type="UCSC" id="uc001fcb.4">
    <property type="organism name" value="human"/>
</dbReference>
<dbReference type="AGR" id="HGNC:10492"/>
<dbReference type="CTD" id="6273"/>
<dbReference type="DisGeNET" id="6273"/>
<dbReference type="GeneCards" id="S100A2"/>
<dbReference type="HGNC" id="HGNC:10492">
    <property type="gene designation" value="S100A2"/>
</dbReference>
<dbReference type="HPA" id="ENSG00000196754">
    <property type="expression patterns" value="Tissue enhanced (esophagus, kidney, urinary bladder)"/>
</dbReference>
<dbReference type="MIM" id="176993">
    <property type="type" value="gene"/>
</dbReference>
<dbReference type="neXtProt" id="NX_P29034"/>
<dbReference type="OpenTargets" id="ENSG00000196754"/>
<dbReference type="PharmGKB" id="PA34904"/>
<dbReference type="VEuPathDB" id="HostDB:ENSG00000196754"/>
<dbReference type="eggNOG" id="ENOG502S4AU">
    <property type="taxonomic scope" value="Eukaryota"/>
</dbReference>
<dbReference type="GeneTree" id="ENSGT00940000163114"/>
<dbReference type="HOGENOM" id="CLU_138624_2_0_1"/>
<dbReference type="InParanoid" id="P29034"/>
<dbReference type="OMA" id="EFFQGCP"/>
<dbReference type="OrthoDB" id="26525at2759"/>
<dbReference type="PAN-GO" id="P29034">
    <property type="GO annotations" value="3 GO annotations based on evolutionary models"/>
</dbReference>
<dbReference type="PhylomeDB" id="P29034"/>
<dbReference type="TreeFam" id="TF332727"/>
<dbReference type="PathwayCommons" id="P29034"/>
<dbReference type="SignaLink" id="P29034"/>
<dbReference type="SIGNOR" id="P29034"/>
<dbReference type="BioGRID-ORCS" id="6273">
    <property type="hits" value="11 hits in 1148 CRISPR screens"/>
</dbReference>
<dbReference type="ChiTaRS" id="S100A2">
    <property type="organism name" value="human"/>
</dbReference>
<dbReference type="EvolutionaryTrace" id="P29034"/>
<dbReference type="GeneWiki" id="S100A2"/>
<dbReference type="GenomeRNAi" id="6273"/>
<dbReference type="Pharos" id="P29034">
    <property type="development level" value="Tbio"/>
</dbReference>
<dbReference type="PRO" id="PR:P29034"/>
<dbReference type="Proteomes" id="UP000005640">
    <property type="component" value="Chromosome 1"/>
</dbReference>
<dbReference type="RNAct" id="P29034">
    <property type="molecule type" value="protein"/>
</dbReference>
<dbReference type="Bgee" id="ENSG00000196754">
    <property type="expression patterns" value="Expressed in tongue squamous epithelium and 137 other cell types or tissues"/>
</dbReference>
<dbReference type="ExpressionAtlas" id="P29034">
    <property type="expression patterns" value="baseline and differential"/>
</dbReference>
<dbReference type="GO" id="GO:0005509">
    <property type="term" value="F:calcium ion binding"/>
    <property type="evidence" value="ECO:0000318"/>
    <property type="project" value="GO_Central"/>
</dbReference>
<dbReference type="GO" id="GO:0048306">
    <property type="term" value="F:calcium-dependent protein binding"/>
    <property type="evidence" value="ECO:0000318"/>
    <property type="project" value="GO_Central"/>
</dbReference>
<dbReference type="GO" id="GO:0042802">
    <property type="term" value="F:identical protein binding"/>
    <property type="evidence" value="ECO:0000353"/>
    <property type="project" value="IntAct"/>
</dbReference>
<dbReference type="GO" id="GO:0046914">
    <property type="term" value="F:transition metal ion binding"/>
    <property type="evidence" value="ECO:0007669"/>
    <property type="project" value="InterPro"/>
</dbReference>
<dbReference type="GO" id="GO:0043542">
    <property type="term" value="P:endothelial cell migration"/>
    <property type="evidence" value="ECO:0000315"/>
    <property type="project" value="UniProtKB"/>
</dbReference>
<dbReference type="CDD" id="cd00213">
    <property type="entry name" value="S-100"/>
    <property type="match status" value="1"/>
</dbReference>
<dbReference type="FunFam" id="1.10.238.10:FF:000044">
    <property type="entry name" value="Protein S100"/>
    <property type="match status" value="1"/>
</dbReference>
<dbReference type="Gene3D" id="1.10.238.10">
    <property type="entry name" value="EF-hand"/>
    <property type="match status" value="1"/>
</dbReference>
<dbReference type="InterPro" id="IPR011992">
    <property type="entry name" value="EF-hand-dom_pair"/>
</dbReference>
<dbReference type="InterPro" id="IPR018247">
    <property type="entry name" value="EF_Hand_1_Ca_BS"/>
</dbReference>
<dbReference type="InterPro" id="IPR002048">
    <property type="entry name" value="EF_hand_dom"/>
</dbReference>
<dbReference type="InterPro" id="IPR034325">
    <property type="entry name" value="S-100_dom"/>
</dbReference>
<dbReference type="InterPro" id="IPR001751">
    <property type="entry name" value="S100/CaBP7/8-like_CS"/>
</dbReference>
<dbReference type="InterPro" id="IPR013787">
    <property type="entry name" value="S100_Ca-bd_sub"/>
</dbReference>
<dbReference type="PANTHER" id="PTHR11639:SF59">
    <property type="entry name" value="PROTEIN S100-A2"/>
    <property type="match status" value="1"/>
</dbReference>
<dbReference type="PANTHER" id="PTHR11639">
    <property type="entry name" value="S100 CALCIUM-BINDING PROTEIN"/>
    <property type="match status" value="1"/>
</dbReference>
<dbReference type="Pfam" id="PF01023">
    <property type="entry name" value="S_100"/>
    <property type="match status" value="1"/>
</dbReference>
<dbReference type="SMART" id="SM01394">
    <property type="entry name" value="S_100"/>
    <property type="match status" value="1"/>
</dbReference>
<dbReference type="SUPFAM" id="SSF47473">
    <property type="entry name" value="EF-hand"/>
    <property type="match status" value="1"/>
</dbReference>
<dbReference type="PROSITE" id="PS00018">
    <property type="entry name" value="EF_HAND_1"/>
    <property type="match status" value="1"/>
</dbReference>
<dbReference type="PROSITE" id="PS50222">
    <property type="entry name" value="EF_HAND_2"/>
    <property type="match status" value="1"/>
</dbReference>
<dbReference type="PROSITE" id="PS00303">
    <property type="entry name" value="S100_CABP"/>
    <property type="match status" value="1"/>
</dbReference>
<keyword id="KW-0002">3D-structure</keyword>
<keyword id="KW-0106">Calcium</keyword>
<keyword id="KW-0903">Direct protein sequencing</keyword>
<keyword id="KW-0479">Metal-binding</keyword>
<keyword id="KW-1267">Proteomics identification</keyword>
<keyword id="KW-1185">Reference proteome</keyword>
<keyword id="KW-0677">Repeat</keyword>
<organism>
    <name type="scientific">Homo sapiens</name>
    <name type="common">Human</name>
    <dbReference type="NCBI Taxonomy" id="9606"/>
    <lineage>
        <taxon>Eukaryota</taxon>
        <taxon>Metazoa</taxon>
        <taxon>Chordata</taxon>
        <taxon>Craniata</taxon>
        <taxon>Vertebrata</taxon>
        <taxon>Euteleostomi</taxon>
        <taxon>Mammalia</taxon>
        <taxon>Eutheria</taxon>
        <taxon>Euarchontoglires</taxon>
        <taxon>Primates</taxon>
        <taxon>Haplorrhini</taxon>
        <taxon>Catarrhini</taxon>
        <taxon>Hominidae</taxon>
        <taxon>Homo</taxon>
    </lineage>
</organism>